<name>RS7_SCHPO</name>
<sequence length="195" mass="21947">MSALNKIVKRSSSQPTETDLLVAQCLYDLESSSKDMAKELRPLQITSAREVEVGGGKKAIVVFVPQPLLKAFHKCQARLTRELEKKFADRHVIFIAQRRILPKPGRKSRVTQKRPRSRTLTAVHNAILEDIVFPTEIIGKRTRQATDGRKTIKVFLDNRDANTVDYKLGSFSSVYHKLTGKNVTFEFPVATGEGL</sequence>
<evidence type="ECO:0000250" key="1">
    <source>
        <dbReference type="UniProtKB" id="P26786"/>
    </source>
</evidence>
<evidence type="ECO:0000269" key="2">
    <source>
    </source>
</evidence>
<evidence type="ECO:0000269" key="3">
    <source>
    </source>
</evidence>
<evidence type="ECO:0000305" key="4"/>
<proteinExistence type="evidence at protein level"/>
<accession>Q10101</accession>
<dbReference type="EMBL" id="CU329670">
    <property type="protein sequence ID" value="CAA92393.1"/>
    <property type="molecule type" value="Genomic_DNA"/>
</dbReference>
<dbReference type="PIR" id="T37927">
    <property type="entry name" value="T37927"/>
</dbReference>
<dbReference type="RefSeq" id="NP_593677.1">
    <property type="nucleotide sequence ID" value="NM_001019109.2"/>
</dbReference>
<dbReference type="PDB" id="9AXT">
    <property type="method" value="EM"/>
    <property type="resolution" value="2.40 A"/>
    <property type="chains" value="AK=1-195"/>
</dbReference>
<dbReference type="PDB" id="9AXV">
    <property type="method" value="EM"/>
    <property type="resolution" value="2.40 A"/>
    <property type="chains" value="AK=1-195"/>
</dbReference>
<dbReference type="PDBsum" id="9AXT"/>
<dbReference type="PDBsum" id="9AXV"/>
<dbReference type="EMDB" id="EMD-43972"/>
<dbReference type="EMDB" id="EMD-43976"/>
<dbReference type="SMR" id="Q10101"/>
<dbReference type="BioGRID" id="279010">
    <property type="interactions" value="13"/>
</dbReference>
<dbReference type="FunCoup" id="Q10101">
    <property type="interactions" value="593"/>
</dbReference>
<dbReference type="STRING" id="284812.Q10101"/>
<dbReference type="iPTMnet" id="Q10101"/>
<dbReference type="PaxDb" id="4896-SPAC18G6.14c.1"/>
<dbReference type="EnsemblFungi" id="SPAC18G6.14c.1">
    <property type="protein sequence ID" value="SPAC18G6.14c.1:pep"/>
    <property type="gene ID" value="SPAC18G6.14c"/>
</dbReference>
<dbReference type="GeneID" id="2542553"/>
<dbReference type="KEGG" id="spo:2542553"/>
<dbReference type="PomBase" id="SPAC18G6.14c">
    <property type="gene designation" value="rps7"/>
</dbReference>
<dbReference type="VEuPathDB" id="FungiDB:SPAC18G6.14c"/>
<dbReference type="eggNOG" id="KOG3320">
    <property type="taxonomic scope" value="Eukaryota"/>
</dbReference>
<dbReference type="HOGENOM" id="CLU_088621_1_2_1"/>
<dbReference type="InParanoid" id="Q10101"/>
<dbReference type="OMA" id="AAYHKVQ"/>
<dbReference type="PhylomeDB" id="Q10101"/>
<dbReference type="Reactome" id="R-SPO-156827">
    <property type="pathway name" value="L13a-mediated translational silencing of Ceruloplasmin expression"/>
</dbReference>
<dbReference type="Reactome" id="R-SPO-1799339">
    <property type="pathway name" value="SRP-dependent cotranslational protein targeting to membrane"/>
</dbReference>
<dbReference type="Reactome" id="R-SPO-6791226">
    <property type="pathway name" value="Major pathway of rRNA processing in the nucleolus and cytosol"/>
</dbReference>
<dbReference type="Reactome" id="R-SPO-72649">
    <property type="pathway name" value="Translation initiation complex formation"/>
</dbReference>
<dbReference type="Reactome" id="R-SPO-72689">
    <property type="pathway name" value="Formation of a pool of free 40S subunits"/>
</dbReference>
<dbReference type="Reactome" id="R-SPO-72695">
    <property type="pathway name" value="Formation of the ternary complex, and subsequently, the 43S complex"/>
</dbReference>
<dbReference type="Reactome" id="R-SPO-72702">
    <property type="pathway name" value="Ribosomal scanning and start codon recognition"/>
</dbReference>
<dbReference type="Reactome" id="R-SPO-72706">
    <property type="pathway name" value="GTP hydrolysis and joining of the 60S ribosomal subunit"/>
</dbReference>
<dbReference type="Reactome" id="R-SPO-975956">
    <property type="pathway name" value="Nonsense Mediated Decay (NMD) independent of the Exon Junction Complex (EJC)"/>
</dbReference>
<dbReference type="Reactome" id="R-SPO-975957">
    <property type="pathway name" value="Nonsense Mediated Decay (NMD) enhanced by the Exon Junction Complex (EJC)"/>
</dbReference>
<dbReference type="PRO" id="PR:Q10101"/>
<dbReference type="Proteomes" id="UP000002485">
    <property type="component" value="Chromosome I"/>
</dbReference>
<dbReference type="GO" id="GO:0005829">
    <property type="term" value="C:cytosol"/>
    <property type="evidence" value="ECO:0007005"/>
    <property type="project" value="PomBase"/>
</dbReference>
<dbReference type="GO" id="GO:0022627">
    <property type="term" value="C:cytosolic small ribosomal subunit"/>
    <property type="evidence" value="ECO:0000269"/>
    <property type="project" value="PomBase"/>
</dbReference>
<dbReference type="GO" id="GO:0005730">
    <property type="term" value="C:nucleolus"/>
    <property type="evidence" value="ECO:0007005"/>
    <property type="project" value="PomBase"/>
</dbReference>
<dbReference type="GO" id="GO:0005634">
    <property type="term" value="C:nucleus"/>
    <property type="evidence" value="ECO:0007005"/>
    <property type="project" value="PomBase"/>
</dbReference>
<dbReference type="GO" id="GO:0032040">
    <property type="term" value="C:small-subunit processome"/>
    <property type="evidence" value="ECO:0000318"/>
    <property type="project" value="GO_Central"/>
</dbReference>
<dbReference type="GO" id="GO:0003735">
    <property type="term" value="F:structural constituent of ribosome"/>
    <property type="evidence" value="ECO:0000266"/>
    <property type="project" value="PomBase"/>
</dbReference>
<dbReference type="GO" id="GO:0002181">
    <property type="term" value="P:cytoplasmic translation"/>
    <property type="evidence" value="ECO:0000266"/>
    <property type="project" value="PomBase"/>
</dbReference>
<dbReference type="GO" id="GO:0042274">
    <property type="term" value="P:ribosomal small subunit biogenesis"/>
    <property type="evidence" value="ECO:0000318"/>
    <property type="project" value="GO_Central"/>
</dbReference>
<dbReference type="GO" id="GO:0006364">
    <property type="term" value="P:rRNA processing"/>
    <property type="evidence" value="ECO:0000318"/>
    <property type="project" value="GO_Central"/>
</dbReference>
<dbReference type="InterPro" id="IPR000554">
    <property type="entry name" value="Ribosomal_eS7"/>
</dbReference>
<dbReference type="InterPro" id="IPR047861">
    <property type="entry name" value="Ribosomal_eS7_CS"/>
</dbReference>
<dbReference type="PANTHER" id="PTHR11278">
    <property type="entry name" value="40S RIBOSOMAL PROTEIN S7"/>
    <property type="match status" value="1"/>
</dbReference>
<dbReference type="PANTHER" id="PTHR11278:SF0">
    <property type="entry name" value="SMALL RIBOSOMAL SUBUNIT PROTEIN ES7"/>
    <property type="match status" value="1"/>
</dbReference>
<dbReference type="Pfam" id="PF01251">
    <property type="entry name" value="Ribosomal_S7e"/>
    <property type="match status" value="1"/>
</dbReference>
<dbReference type="PROSITE" id="PS00948">
    <property type="entry name" value="RIBOSOMAL_S7E"/>
    <property type="match status" value="1"/>
</dbReference>
<feature type="chain" id="PRO_0000174211" description="Small ribosomal subunit protein eS7">
    <location>
        <begin position="1"/>
        <end position="195"/>
    </location>
</feature>
<feature type="modified residue" description="Phosphothreonine" evidence="3">
    <location>
        <position position="146"/>
    </location>
</feature>
<feature type="modified residue" description="Phosphothreonine" evidence="3">
    <location>
        <position position="151"/>
    </location>
</feature>
<feature type="modified residue" description="Phosphoserine" evidence="3">
    <location>
        <position position="172"/>
    </location>
</feature>
<feature type="modified residue" description="Phosphoserine" evidence="3">
    <location>
        <position position="173"/>
    </location>
</feature>
<reference key="1">
    <citation type="journal article" date="2002" name="Nature">
        <title>The genome sequence of Schizosaccharomyces pombe.</title>
        <authorList>
            <person name="Wood V."/>
            <person name="Gwilliam R."/>
            <person name="Rajandream M.A."/>
            <person name="Lyne M.H."/>
            <person name="Lyne R."/>
            <person name="Stewart A."/>
            <person name="Sgouros J.G."/>
            <person name="Peat N."/>
            <person name="Hayles J."/>
            <person name="Baker S.G."/>
            <person name="Basham D."/>
            <person name="Bowman S."/>
            <person name="Brooks K."/>
            <person name="Brown D."/>
            <person name="Brown S."/>
            <person name="Chillingworth T."/>
            <person name="Churcher C.M."/>
            <person name="Collins M."/>
            <person name="Connor R."/>
            <person name="Cronin A."/>
            <person name="Davis P."/>
            <person name="Feltwell T."/>
            <person name="Fraser A."/>
            <person name="Gentles S."/>
            <person name="Goble A."/>
            <person name="Hamlin N."/>
            <person name="Harris D.E."/>
            <person name="Hidalgo J."/>
            <person name="Hodgson G."/>
            <person name="Holroyd S."/>
            <person name="Hornsby T."/>
            <person name="Howarth S."/>
            <person name="Huckle E.J."/>
            <person name="Hunt S."/>
            <person name="Jagels K."/>
            <person name="James K.D."/>
            <person name="Jones L."/>
            <person name="Jones M."/>
            <person name="Leather S."/>
            <person name="McDonald S."/>
            <person name="McLean J."/>
            <person name="Mooney P."/>
            <person name="Moule S."/>
            <person name="Mungall K.L."/>
            <person name="Murphy L.D."/>
            <person name="Niblett D."/>
            <person name="Odell C."/>
            <person name="Oliver K."/>
            <person name="O'Neil S."/>
            <person name="Pearson D."/>
            <person name="Quail M.A."/>
            <person name="Rabbinowitsch E."/>
            <person name="Rutherford K.M."/>
            <person name="Rutter S."/>
            <person name="Saunders D."/>
            <person name="Seeger K."/>
            <person name="Sharp S."/>
            <person name="Skelton J."/>
            <person name="Simmonds M.N."/>
            <person name="Squares R."/>
            <person name="Squares S."/>
            <person name="Stevens K."/>
            <person name="Taylor K."/>
            <person name="Taylor R.G."/>
            <person name="Tivey A."/>
            <person name="Walsh S.V."/>
            <person name="Warren T."/>
            <person name="Whitehead S."/>
            <person name="Woodward J.R."/>
            <person name="Volckaert G."/>
            <person name="Aert R."/>
            <person name="Robben J."/>
            <person name="Grymonprez B."/>
            <person name="Weltjens I."/>
            <person name="Vanstreels E."/>
            <person name="Rieger M."/>
            <person name="Schaefer M."/>
            <person name="Mueller-Auer S."/>
            <person name="Gabel C."/>
            <person name="Fuchs M."/>
            <person name="Duesterhoeft A."/>
            <person name="Fritzc C."/>
            <person name="Holzer E."/>
            <person name="Moestl D."/>
            <person name="Hilbert H."/>
            <person name="Borzym K."/>
            <person name="Langer I."/>
            <person name="Beck A."/>
            <person name="Lehrach H."/>
            <person name="Reinhardt R."/>
            <person name="Pohl T.M."/>
            <person name="Eger P."/>
            <person name="Zimmermann W."/>
            <person name="Wedler H."/>
            <person name="Wambutt R."/>
            <person name="Purnelle B."/>
            <person name="Goffeau A."/>
            <person name="Cadieu E."/>
            <person name="Dreano S."/>
            <person name="Gloux S."/>
            <person name="Lelaure V."/>
            <person name="Mottier S."/>
            <person name="Galibert F."/>
            <person name="Aves S.J."/>
            <person name="Xiang Z."/>
            <person name="Hunt C."/>
            <person name="Moore K."/>
            <person name="Hurst S.M."/>
            <person name="Lucas M."/>
            <person name="Rochet M."/>
            <person name="Gaillardin C."/>
            <person name="Tallada V.A."/>
            <person name="Garzon A."/>
            <person name="Thode G."/>
            <person name="Daga R.R."/>
            <person name="Cruzado L."/>
            <person name="Jimenez J."/>
            <person name="Sanchez M."/>
            <person name="del Rey F."/>
            <person name="Benito J."/>
            <person name="Dominguez A."/>
            <person name="Revuelta J.L."/>
            <person name="Moreno S."/>
            <person name="Armstrong J."/>
            <person name="Forsburg S.L."/>
            <person name="Cerutti L."/>
            <person name="Lowe T."/>
            <person name="McCombie W.R."/>
            <person name="Paulsen I."/>
            <person name="Potashkin J."/>
            <person name="Shpakovski G.V."/>
            <person name="Ussery D."/>
            <person name="Barrell B.G."/>
            <person name="Nurse P."/>
        </authorList>
    </citation>
    <scope>NUCLEOTIDE SEQUENCE [LARGE SCALE GENOMIC DNA]</scope>
    <source>
        <strain>972 / ATCC 24843</strain>
    </source>
</reference>
<reference key="2">
    <citation type="journal article" date="2006" name="Nat. Biotechnol.">
        <title>ORFeome cloning and global analysis of protein localization in the fission yeast Schizosaccharomyces pombe.</title>
        <authorList>
            <person name="Matsuyama A."/>
            <person name="Arai R."/>
            <person name="Yashiroda Y."/>
            <person name="Shirai A."/>
            <person name="Kamata A."/>
            <person name="Sekido S."/>
            <person name="Kobayashi Y."/>
            <person name="Hashimoto A."/>
            <person name="Hamamoto M."/>
            <person name="Hiraoka Y."/>
            <person name="Horinouchi S."/>
            <person name="Yoshida M."/>
        </authorList>
    </citation>
    <scope>SUBCELLULAR LOCATION [LARGE SCALE ANALYSIS]</scope>
</reference>
<reference key="3">
    <citation type="journal article" date="2008" name="J. Proteome Res.">
        <title>Phosphoproteome analysis of fission yeast.</title>
        <authorList>
            <person name="Wilson-Grady J.T."/>
            <person name="Villen J."/>
            <person name="Gygi S.P."/>
        </authorList>
    </citation>
    <scope>PHOSPHORYLATION [LARGE SCALE ANALYSIS] AT THR-146; THR-151; SER-172 AND SER-173</scope>
    <scope>IDENTIFICATION BY MASS SPECTROMETRY</scope>
</reference>
<gene>
    <name type="primary">rps7</name>
    <name type="ORF">SPAC18G6.14c</name>
</gene>
<protein>
    <recommendedName>
        <fullName evidence="4">Small ribosomal subunit protein eS7</fullName>
    </recommendedName>
    <alternativeName>
        <fullName>40S ribosomal protein S7</fullName>
    </alternativeName>
</protein>
<organism>
    <name type="scientific">Schizosaccharomyces pombe (strain 972 / ATCC 24843)</name>
    <name type="common">Fission yeast</name>
    <dbReference type="NCBI Taxonomy" id="284812"/>
    <lineage>
        <taxon>Eukaryota</taxon>
        <taxon>Fungi</taxon>
        <taxon>Dikarya</taxon>
        <taxon>Ascomycota</taxon>
        <taxon>Taphrinomycotina</taxon>
        <taxon>Schizosaccharomycetes</taxon>
        <taxon>Schizosaccharomycetales</taxon>
        <taxon>Schizosaccharomycetaceae</taxon>
        <taxon>Schizosaccharomyces</taxon>
    </lineage>
</organism>
<comment type="function">
    <text evidence="1">Component of the ribosome, a large ribonucleoprotein complex responsible for the synthesis of proteins in the cell. The small ribosomal subunit (SSU) binds messenger RNAs (mRNAs) and translates the encoded message by selecting cognate aminoacyl-transfer RNA (tRNA) molecules. The large subunit (LSU) contains the ribosomal catalytic site termed the peptidyl transferase center (PTC), which catalyzes the formation of peptide bonds, thereby polymerizing the amino acids delivered by tRNAs into a polypeptide chain. The nascent polypeptides leave the ribosome through a tunnel in the LSU and interact with protein factors that function in enzymatic processing, targeting, and the membrane insertion of nascent chains at the exit of the ribosomal tunnel. eS7 is involved in nucleolar processing of pre-18S ribosomal RNA and ribosome assembly.</text>
</comment>
<comment type="subunit">
    <text evidence="1">Component of the small ribosomal subunit (SSU). Mature yeast ribosomes consist of a small (40S) and a large (60S) subunit. The 40S small subunit contains 1 molecule of ribosomal RNA (18S rRNA) and at least 33 different proteins. The large 60S subunit contains 3 rRNA molecules (25S, 5.8S and 5S rRNA) and at least 46 different proteins. Interacts with snoRNA U3. uS11 interacts with MPP10. Component of the ribosomal small subunit (SSU) processome composed of at least 40 protein subunits and snoRNA U3.</text>
</comment>
<comment type="subcellular location">
    <subcellularLocation>
        <location evidence="2">Cytoplasm</location>
    </subcellularLocation>
    <subcellularLocation>
        <location evidence="2">Nucleus</location>
    </subcellularLocation>
    <subcellularLocation>
        <location evidence="2">Nucleus</location>
        <location evidence="2">Nucleolus</location>
    </subcellularLocation>
</comment>
<comment type="similarity">
    <text evidence="4">Belongs to the eukaryotic ribosomal protein eS7 family.</text>
</comment>
<keyword id="KW-0002">3D-structure</keyword>
<keyword id="KW-0963">Cytoplasm</keyword>
<keyword id="KW-0539">Nucleus</keyword>
<keyword id="KW-0597">Phosphoprotein</keyword>
<keyword id="KW-1185">Reference proteome</keyword>
<keyword id="KW-0687">Ribonucleoprotein</keyword>
<keyword id="KW-0689">Ribosomal protein</keyword>